<evidence type="ECO:0000255" key="1">
    <source>
        <dbReference type="HAMAP-Rule" id="MF_01338"/>
    </source>
</evidence>
<proteinExistence type="inferred from homology"/>
<feature type="chain" id="PRO_0000062459" description="Ribulose bisphosphate carboxylase large chain">
    <location>
        <begin position="1" status="less than"/>
        <end position="465"/>
    </location>
</feature>
<feature type="active site" description="Proton acceptor" evidence="1">
    <location>
        <position position="165"/>
    </location>
</feature>
<feature type="active site" description="Proton acceptor" evidence="1">
    <location>
        <position position="284"/>
    </location>
</feature>
<feature type="binding site" description="in homodimeric partner" evidence="1">
    <location>
        <position position="113"/>
    </location>
    <ligand>
        <name>substrate</name>
    </ligand>
</feature>
<feature type="binding site" evidence="1">
    <location>
        <position position="163"/>
    </location>
    <ligand>
        <name>substrate</name>
    </ligand>
</feature>
<feature type="binding site" evidence="1">
    <location>
        <position position="167"/>
    </location>
    <ligand>
        <name>substrate</name>
    </ligand>
</feature>
<feature type="binding site" description="via carbamate group" evidence="1">
    <location>
        <position position="191"/>
    </location>
    <ligand>
        <name>Mg(2+)</name>
        <dbReference type="ChEBI" id="CHEBI:18420"/>
    </ligand>
</feature>
<feature type="binding site" evidence="1">
    <location>
        <position position="193"/>
    </location>
    <ligand>
        <name>Mg(2+)</name>
        <dbReference type="ChEBI" id="CHEBI:18420"/>
    </ligand>
</feature>
<feature type="binding site" evidence="1">
    <location>
        <position position="194"/>
    </location>
    <ligand>
        <name>Mg(2+)</name>
        <dbReference type="ChEBI" id="CHEBI:18420"/>
    </ligand>
</feature>
<feature type="binding site" evidence="1">
    <location>
        <position position="285"/>
    </location>
    <ligand>
        <name>substrate</name>
    </ligand>
</feature>
<feature type="binding site" evidence="1">
    <location>
        <position position="317"/>
    </location>
    <ligand>
        <name>substrate</name>
    </ligand>
</feature>
<feature type="binding site" evidence="1">
    <location>
        <position position="369"/>
    </location>
    <ligand>
        <name>substrate</name>
    </ligand>
</feature>
<feature type="site" description="Transition state stabilizer" evidence="1">
    <location>
        <position position="324"/>
    </location>
</feature>
<feature type="modified residue" description="N6,N6,N6-trimethyllysine" evidence="1">
    <location>
        <position position="4"/>
    </location>
</feature>
<feature type="modified residue" description="N6-carboxylysine" evidence="1">
    <location>
        <position position="191"/>
    </location>
</feature>
<feature type="disulfide bond" description="Interchain; in linked form" evidence="1">
    <location>
        <position position="237"/>
    </location>
</feature>
<feature type="non-terminal residue">
    <location>
        <position position="1"/>
    </location>
</feature>
<gene>
    <name evidence="1" type="primary">rbcL</name>
</gene>
<organism>
    <name type="scientific">Ephedra tweediana</name>
    <name type="common">Vining horsetail</name>
    <dbReference type="NCBI Taxonomy" id="3390"/>
    <lineage>
        <taxon>Eukaryota</taxon>
        <taxon>Viridiplantae</taxon>
        <taxon>Streptophyta</taxon>
        <taxon>Embryophyta</taxon>
        <taxon>Tracheophyta</taxon>
        <taxon>Spermatophyta</taxon>
        <taxon>Gnetopsida</taxon>
        <taxon>Gnetidae</taxon>
        <taxon>Ephedrales</taxon>
        <taxon>Ephedraceae</taxon>
        <taxon>Ephedra</taxon>
    </lineage>
</organism>
<geneLocation type="chloroplast"/>
<keyword id="KW-0113">Calvin cycle</keyword>
<keyword id="KW-0120">Carbon dioxide fixation</keyword>
<keyword id="KW-0150">Chloroplast</keyword>
<keyword id="KW-1015">Disulfide bond</keyword>
<keyword id="KW-0456">Lyase</keyword>
<keyword id="KW-0460">Magnesium</keyword>
<keyword id="KW-0479">Metal-binding</keyword>
<keyword id="KW-0488">Methylation</keyword>
<keyword id="KW-0503">Monooxygenase</keyword>
<keyword id="KW-0560">Oxidoreductase</keyword>
<keyword id="KW-0601">Photorespiration</keyword>
<keyword id="KW-0602">Photosynthesis</keyword>
<keyword id="KW-0934">Plastid</keyword>
<reference key="1">
    <citation type="journal article" date="1993" name="Ann. Mo. Bot. Gard.">
        <title>Phylogenetics of seed plants: an analysis of nucleotide sequences from the plastid gene rbcL.</title>
        <authorList>
            <person name="Chase M.W."/>
            <person name="Soltis D.E."/>
            <person name="Olmstead R.G."/>
            <person name="Morgan D."/>
            <person name="Les D.H."/>
            <person name="Mishler B.D."/>
            <person name="Duvall M.R."/>
            <person name="Price R.A."/>
            <person name="Hills H.G."/>
            <person name="Qiu Y.L."/>
            <person name="Kron K.A."/>
            <person name="Rettig J.H."/>
            <person name="Conti E."/>
            <person name="Palmer J.D."/>
            <person name="Manhart J.R."/>
            <person name="Sytsma K.J."/>
            <person name="Michaels H.J."/>
            <person name="Kress W.J."/>
            <person name="Karol K.G."/>
            <person name="Clark W.D."/>
            <person name="Hedroen M."/>
            <person name="Gaut B.S."/>
            <person name="Jansen R.K."/>
            <person name="Kim K.J."/>
            <person name="Wimpee C.F."/>
            <person name="Smith J.F."/>
            <person name="Furnier G.R."/>
            <person name="Strauss S.H."/>
            <person name="Xiang Q.-Y."/>
            <person name="Plunkett G.M."/>
            <person name="Soltis P.S."/>
            <person name="Swensen S."/>
            <person name="Williams S.E."/>
            <person name="Gadek P.A."/>
            <person name="Quinn C.J."/>
            <person name="Eguiarte L.E."/>
            <person name="Golenberg E."/>
            <person name="Learn G.H."/>
            <person name="Graham S.W."/>
            <person name="Barrett S.C.H."/>
            <person name="Dayanandan S."/>
            <person name="Albert V.A."/>
        </authorList>
        <dbReference type="AGRICOLA" id="IND93053807"/>
    </citation>
    <scope>NUCLEOTIDE SEQUENCE [GENOMIC DNA]</scope>
    <source>
        <tissue>Leaf</tissue>
    </source>
</reference>
<dbReference type="EC" id="4.1.1.39" evidence="1"/>
<dbReference type="EMBL" id="L12677">
    <property type="protein sequence ID" value="AAA84240.2"/>
    <property type="molecule type" value="Genomic_DNA"/>
</dbReference>
<dbReference type="SMR" id="Q32223"/>
<dbReference type="GO" id="GO:0009507">
    <property type="term" value="C:chloroplast"/>
    <property type="evidence" value="ECO:0007669"/>
    <property type="project" value="UniProtKB-SubCell"/>
</dbReference>
<dbReference type="GO" id="GO:0000287">
    <property type="term" value="F:magnesium ion binding"/>
    <property type="evidence" value="ECO:0007669"/>
    <property type="project" value="InterPro"/>
</dbReference>
<dbReference type="GO" id="GO:0004497">
    <property type="term" value="F:monooxygenase activity"/>
    <property type="evidence" value="ECO:0007669"/>
    <property type="project" value="UniProtKB-KW"/>
</dbReference>
<dbReference type="GO" id="GO:0016984">
    <property type="term" value="F:ribulose-bisphosphate carboxylase activity"/>
    <property type="evidence" value="ECO:0007669"/>
    <property type="project" value="UniProtKB-EC"/>
</dbReference>
<dbReference type="GO" id="GO:0009853">
    <property type="term" value="P:photorespiration"/>
    <property type="evidence" value="ECO:0007669"/>
    <property type="project" value="UniProtKB-KW"/>
</dbReference>
<dbReference type="GO" id="GO:0019253">
    <property type="term" value="P:reductive pentose-phosphate cycle"/>
    <property type="evidence" value="ECO:0007669"/>
    <property type="project" value="UniProtKB-KW"/>
</dbReference>
<dbReference type="CDD" id="cd08212">
    <property type="entry name" value="RuBisCO_large_I"/>
    <property type="match status" value="1"/>
</dbReference>
<dbReference type="FunFam" id="3.20.20.110:FF:000001">
    <property type="entry name" value="Ribulose bisphosphate carboxylase large chain"/>
    <property type="match status" value="1"/>
</dbReference>
<dbReference type="FunFam" id="3.30.70.150:FF:000001">
    <property type="entry name" value="Ribulose bisphosphate carboxylase large chain"/>
    <property type="match status" value="1"/>
</dbReference>
<dbReference type="Gene3D" id="3.20.20.110">
    <property type="entry name" value="Ribulose bisphosphate carboxylase, large subunit, C-terminal domain"/>
    <property type="match status" value="1"/>
</dbReference>
<dbReference type="Gene3D" id="3.30.70.150">
    <property type="entry name" value="RuBisCO large subunit, N-terminal domain"/>
    <property type="match status" value="1"/>
</dbReference>
<dbReference type="HAMAP" id="MF_01338">
    <property type="entry name" value="RuBisCO_L_type1"/>
    <property type="match status" value="1"/>
</dbReference>
<dbReference type="InterPro" id="IPR033966">
    <property type="entry name" value="RuBisCO"/>
</dbReference>
<dbReference type="InterPro" id="IPR020878">
    <property type="entry name" value="RuBisCo_large_chain_AS"/>
</dbReference>
<dbReference type="InterPro" id="IPR000685">
    <property type="entry name" value="RuBisCO_lsu_C"/>
</dbReference>
<dbReference type="InterPro" id="IPR036376">
    <property type="entry name" value="RuBisCO_lsu_C_sf"/>
</dbReference>
<dbReference type="InterPro" id="IPR017443">
    <property type="entry name" value="RuBisCO_lsu_fd_N"/>
</dbReference>
<dbReference type="InterPro" id="IPR036422">
    <property type="entry name" value="RuBisCO_lsu_N_sf"/>
</dbReference>
<dbReference type="InterPro" id="IPR020888">
    <property type="entry name" value="RuBisCO_lsuI"/>
</dbReference>
<dbReference type="NCBIfam" id="NF003252">
    <property type="entry name" value="PRK04208.1"/>
    <property type="match status" value="1"/>
</dbReference>
<dbReference type="PANTHER" id="PTHR42704">
    <property type="entry name" value="RIBULOSE BISPHOSPHATE CARBOXYLASE"/>
    <property type="match status" value="1"/>
</dbReference>
<dbReference type="PANTHER" id="PTHR42704:SF15">
    <property type="entry name" value="RIBULOSE BISPHOSPHATE CARBOXYLASE LARGE CHAIN"/>
    <property type="match status" value="1"/>
</dbReference>
<dbReference type="Pfam" id="PF00016">
    <property type="entry name" value="RuBisCO_large"/>
    <property type="match status" value="1"/>
</dbReference>
<dbReference type="Pfam" id="PF02788">
    <property type="entry name" value="RuBisCO_large_N"/>
    <property type="match status" value="1"/>
</dbReference>
<dbReference type="SFLD" id="SFLDG01052">
    <property type="entry name" value="RuBisCO"/>
    <property type="match status" value="1"/>
</dbReference>
<dbReference type="SFLD" id="SFLDS00014">
    <property type="entry name" value="RuBisCO"/>
    <property type="match status" value="1"/>
</dbReference>
<dbReference type="SFLD" id="SFLDG00301">
    <property type="entry name" value="RuBisCO-like_proteins"/>
    <property type="match status" value="1"/>
</dbReference>
<dbReference type="SUPFAM" id="SSF51649">
    <property type="entry name" value="RuBisCo, C-terminal domain"/>
    <property type="match status" value="1"/>
</dbReference>
<dbReference type="SUPFAM" id="SSF54966">
    <property type="entry name" value="RuBisCO, large subunit, small (N-terminal) domain"/>
    <property type="match status" value="1"/>
</dbReference>
<dbReference type="PROSITE" id="PS00157">
    <property type="entry name" value="RUBISCO_LARGE"/>
    <property type="match status" value="1"/>
</dbReference>
<accession>Q32223</accession>
<name>RBL_EPHTW</name>
<comment type="function">
    <text evidence="1">RuBisCO catalyzes two reactions: the carboxylation of D-ribulose 1,5-bisphosphate, the primary event in carbon dioxide fixation, as well as the oxidative fragmentation of the pentose substrate in the photorespiration process. Both reactions occur simultaneously and in competition at the same active site.</text>
</comment>
<comment type="catalytic activity">
    <reaction evidence="1">
        <text>2 (2R)-3-phosphoglycerate + 2 H(+) = D-ribulose 1,5-bisphosphate + CO2 + H2O</text>
        <dbReference type="Rhea" id="RHEA:23124"/>
        <dbReference type="ChEBI" id="CHEBI:15377"/>
        <dbReference type="ChEBI" id="CHEBI:15378"/>
        <dbReference type="ChEBI" id="CHEBI:16526"/>
        <dbReference type="ChEBI" id="CHEBI:57870"/>
        <dbReference type="ChEBI" id="CHEBI:58272"/>
        <dbReference type="EC" id="4.1.1.39"/>
    </reaction>
</comment>
<comment type="catalytic activity">
    <reaction evidence="1">
        <text>D-ribulose 1,5-bisphosphate + O2 = 2-phosphoglycolate + (2R)-3-phosphoglycerate + 2 H(+)</text>
        <dbReference type="Rhea" id="RHEA:36631"/>
        <dbReference type="ChEBI" id="CHEBI:15378"/>
        <dbReference type="ChEBI" id="CHEBI:15379"/>
        <dbReference type="ChEBI" id="CHEBI:57870"/>
        <dbReference type="ChEBI" id="CHEBI:58033"/>
        <dbReference type="ChEBI" id="CHEBI:58272"/>
    </reaction>
</comment>
<comment type="cofactor">
    <cofactor evidence="1">
        <name>Mg(2+)</name>
        <dbReference type="ChEBI" id="CHEBI:18420"/>
    </cofactor>
    <text evidence="1">Binds 1 Mg(2+) ion per subunit.</text>
</comment>
<comment type="subunit">
    <text evidence="1">Heterohexadecamer of 8 large chains and 8 small chains; disulfide-linked. The disulfide link is formed within the large subunit homodimers.</text>
</comment>
<comment type="subcellular location">
    <subcellularLocation>
        <location>Plastid</location>
        <location>Chloroplast</location>
    </subcellularLocation>
</comment>
<comment type="PTM">
    <text evidence="1">The disulfide bond which can form in the large chain dimeric partners within the hexadecamer appears to be associated with oxidative stress and protein turnover.</text>
</comment>
<comment type="miscellaneous">
    <text evidence="1">The basic functional RuBisCO is composed of a large chain homodimer in a 'head-to-tail' conformation. In form I RuBisCO this homodimer is arranged in a barrel-like tetramer with the small subunits forming a tetrameric 'cap' on each end of the 'barrel'.</text>
</comment>
<comment type="similarity">
    <text evidence="1">Belongs to the RuBisCO large chain family. Type I subfamily.</text>
</comment>
<protein>
    <recommendedName>
        <fullName evidence="1">Ribulose bisphosphate carboxylase large chain</fullName>
        <shortName evidence="1">RuBisCO large subunit</shortName>
        <ecNumber evidence="1">4.1.1.39</ecNumber>
    </recommendedName>
</protein>
<sequence>DGFKAGVKDYRLTYYTPEYQTKDTDILAAFRVTPQPGVPPEEAGWAVAAESSTGTWTTVWTDGLTSLDRYKGRCCDIEPVPGEDNQYFAYVAYPLDLFEEGSVTNMFTSIVGNVFGFKALRALRLEDLRIPTAYIQTFQGPPHGIQVERDKLNKYGRPLLGCTIKPKLGLSAKNYGRAVYECLRGGLDFTKDDENVNSRAFMRWRDRFVFCAEAIYKAQAETGEIKGHYLNATSGTCEEMIKRAVFARELGVPIVMHDYLTGGFTANTTLAHYCRDNGLLLHIHRAMHAVIDRQKNHGMHFRVLAKALRMSGGDHIHAGTVVGKLEGEREITLGFVDLLRDDFIEKDRSRGIYFTQDWVSMPGVLPVASGGIHVWHMPALTEIFGDDAVLQFGGGTLGHPWGNAPGAVANRVALEACVQARNEGRDLAREGNEVIREACKWSPELAAACEVWKEIKFEFATVDTL</sequence>